<protein>
    <recommendedName>
        <fullName evidence="1">UvrABC system protein C</fullName>
        <shortName evidence="1">Protein UvrC</shortName>
    </recommendedName>
    <alternativeName>
        <fullName evidence="1">Excinuclease ABC subunit C</fullName>
    </alternativeName>
</protein>
<comment type="function">
    <text evidence="1">The UvrABC repair system catalyzes the recognition and processing of DNA lesions. UvrC both incises the 5' and 3' sides of the lesion. The N-terminal half is responsible for the 3' incision and the C-terminal half is responsible for the 5' incision.</text>
</comment>
<comment type="subunit">
    <text evidence="1">Interacts with UvrB in an incision complex.</text>
</comment>
<comment type="subcellular location">
    <subcellularLocation>
        <location evidence="1">Cytoplasm</location>
    </subcellularLocation>
</comment>
<comment type="similarity">
    <text evidence="1">Belongs to the UvrC family.</text>
</comment>
<feature type="chain" id="PRO_0000264935" description="UvrABC system protein C">
    <location>
        <begin position="1"/>
        <end position="671"/>
    </location>
</feature>
<feature type="domain" description="GIY-YIG" evidence="1">
    <location>
        <begin position="37"/>
        <end position="115"/>
    </location>
</feature>
<feature type="domain" description="UVR" evidence="1">
    <location>
        <begin position="232"/>
        <end position="267"/>
    </location>
</feature>
<feature type="region of interest" description="Disordered" evidence="2">
    <location>
        <begin position="1"/>
        <end position="20"/>
    </location>
</feature>
<feature type="compositionally biased region" description="Low complexity" evidence="2">
    <location>
        <begin position="10"/>
        <end position="20"/>
    </location>
</feature>
<gene>
    <name evidence="1" type="primary">uvrC</name>
    <name type="ordered locus">Rfer_2244</name>
</gene>
<accession>Q21W87</accession>
<sequence>MPHLPDSMSPEAPAGPAPATLPAHPAQLLSDVAGLPPLPGVYRYFDFDGAVLYVGKAINLKKRVSSYFQKNHGGTRIGHMVSKIVRLETTVVRSEAEALLLENNLIKTLNPKYNILFRDDKSYPYLKMTGASSSSNPGTSFPRVSYYRGAVEKKHQYFGPYPSAWAVKEAILLMQKVFHLRTCEDPVFNNRTRPCLLYQIKRCSAPCVGHISAADYAQDVANAERFLRGDARQVMEALEARMMAHAEKLEFEQAAELRNQVAALSNVLHQQSVDNVADRDVDILAVKVQGGRACVNLAMVRGGRHLGDRPYFPAHVEDATEIYNAGGFEEAVEDSTTAPPVPSVETQVLEAFVAQHYLNVPVPPTLIVSAPVNKQLLEALAIQSGVKVTAVHQPREQRRVWLEMAQTNAGLQLARLLSEEGSQQARTRALAEALDLALDDLDALRVECFDISHTAGEATQASCVVFAHHKMQNAEYRRYNINDITPGDDYAAMRQVLLRRYGKLAETLREAQQTGQMPAGTGRLPDLVLVDGGRGQVSMAREVFEQLGLDLSLIVGVEKGEGRKVGLEELVFADGREKVYLGKDSAALMLVAQIRDEAHRFAITGMRAKRAKVRVDGGKLEEIPGIGPKRRSKLLQRFGGVRGVALAGAEDIATVAGISRELAEEIYRALH</sequence>
<organism>
    <name type="scientific">Albidiferax ferrireducens (strain ATCC BAA-621 / DSM 15236 / T118)</name>
    <name type="common">Rhodoferax ferrireducens</name>
    <dbReference type="NCBI Taxonomy" id="338969"/>
    <lineage>
        <taxon>Bacteria</taxon>
        <taxon>Pseudomonadati</taxon>
        <taxon>Pseudomonadota</taxon>
        <taxon>Betaproteobacteria</taxon>
        <taxon>Burkholderiales</taxon>
        <taxon>Comamonadaceae</taxon>
        <taxon>Rhodoferax</taxon>
    </lineage>
</organism>
<evidence type="ECO:0000255" key="1">
    <source>
        <dbReference type="HAMAP-Rule" id="MF_00203"/>
    </source>
</evidence>
<evidence type="ECO:0000256" key="2">
    <source>
        <dbReference type="SAM" id="MobiDB-lite"/>
    </source>
</evidence>
<reference key="1">
    <citation type="submission" date="2006-02" db="EMBL/GenBank/DDBJ databases">
        <title>Complete sequence of chromosome of Rhodoferax ferrireducens DSM 15236.</title>
        <authorList>
            <person name="Copeland A."/>
            <person name="Lucas S."/>
            <person name="Lapidus A."/>
            <person name="Barry K."/>
            <person name="Detter J.C."/>
            <person name="Glavina del Rio T."/>
            <person name="Hammon N."/>
            <person name="Israni S."/>
            <person name="Pitluck S."/>
            <person name="Brettin T."/>
            <person name="Bruce D."/>
            <person name="Han C."/>
            <person name="Tapia R."/>
            <person name="Gilna P."/>
            <person name="Kiss H."/>
            <person name="Schmutz J."/>
            <person name="Larimer F."/>
            <person name="Land M."/>
            <person name="Kyrpides N."/>
            <person name="Ivanova N."/>
            <person name="Richardson P."/>
        </authorList>
    </citation>
    <scope>NUCLEOTIDE SEQUENCE [LARGE SCALE GENOMIC DNA]</scope>
    <source>
        <strain>ATCC BAA-621 / DSM 15236 / T118</strain>
    </source>
</reference>
<dbReference type="EMBL" id="CP000267">
    <property type="protein sequence ID" value="ABD69966.1"/>
    <property type="molecule type" value="Genomic_DNA"/>
</dbReference>
<dbReference type="SMR" id="Q21W87"/>
<dbReference type="STRING" id="338969.Rfer_2244"/>
<dbReference type="KEGG" id="rfr:Rfer_2244"/>
<dbReference type="eggNOG" id="COG0322">
    <property type="taxonomic scope" value="Bacteria"/>
</dbReference>
<dbReference type="HOGENOM" id="CLU_014841_3_0_4"/>
<dbReference type="Proteomes" id="UP000008332">
    <property type="component" value="Chromosome"/>
</dbReference>
<dbReference type="GO" id="GO:0005737">
    <property type="term" value="C:cytoplasm"/>
    <property type="evidence" value="ECO:0007669"/>
    <property type="project" value="UniProtKB-SubCell"/>
</dbReference>
<dbReference type="GO" id="GO:0009380">
    <property type="term" value="C:excinuclease repair complex"/>
    <property type="evidence" value="ECO:0007669"/>
    <property type="project" value="InterPro"/>
</dbReference>
<dbReference type="GO" id="GO:0003677">
    <property type="term" value="F:DNA binding"/>
    <property type="evidence" value="ECO:0007669"/>
    <property type="project" value="UniProtKB-UniRule"/>
</dbReference>
<dbReference type="GO" id="GO:0009381">
    <property type="term" value="F:excinuclease ABC activity"/>
    <property type="evidence" value="ECO:0007669"/>
    <property type="project" value="UniProtKB-UniRule"/>
</dbReference>
<dbReference type="GO" id="GO:0006289">
    <property type="term" value="P:nucleotide-excision repair"/>
    <property type="evidence" value="ECO:0007669"/>
    <property type="project" value="UniProtKB-UniRule"/>
</dbReference>
<dbReference type="GO" id="GO:0009432">
    <property type="term" value="P:SOS response"/>
    <property type="evidence" value="ECO:0007669"/>
    <property type="project" value="UniProtKB-UniRule"/>
</dbReference>
<dbReference type="CDD" id="cd10434">
    <property type="entry name" value="GIY-YIG_UvrC_Cho"/>
    <property type="match status" value="1"/>
</dbReference>
<dbReference type="FunFam" id="3.30.420.340:FF:000001">
    <property type="entry name" value="UvrABC system protein C"/>
    <property type="match status" value="1"/>
</dbReference>
<dbReference type="FunFam" id="3.40.1440.10:FF:000001">
    <property type="entry name" value="UvrABC system protein C"/>
    <property type="match status" value="1"/>
</dbReference>
<dbReference type="Gene3D" id="1.10.150.20">
    <property type="entry name" value="5' to 3' exonuclease, C-terminal subdomain"/>
    <property type="match status" value="1"/>
</dbReference>
<dbReference type="Gene3D" id="3.40.1440.10">
    <property type="entry name" value="GIY-YIG endonuclease"/>
    <property type="match status" value="1"/>
</dbReference>
<dbReference type="Gene3D" id="4.10.860.10">
    <property type="entry name" value="UVR domain"/>
    <property type="match status" value="1"/>
</dbReference>
<dbReference type="Gene3D" id="3.30.420.340">
    <property type="entry name" value="UvrC, RNAse H endonuclease domain"/>
    <property type="match status" value="1"/>
</dbReference>
<dbReference type="HAMAP" id="MF_00203">
    <property type="entry name" value="UvrC"/>
    <property type="match status" value="1"/>
</dbReference>
<dbReference type="InterPro" id="IPR000305">
    <property type="entry name" value="GIY-YIG_endonuc"/>
</dbReference>
<dbReference type="InterPro" id="IPR035901">
    <property type="entry name" value="GIY-YIG_endonuc_sf"/>
</dbReference>
<dbReference type="InterPro" id="IPR047296">
    <property type="entry name" value="GIY-YIG_UvrC_Cho"/>
</dbReference>
<dbReference type="InterPro" id="IPR003583">
    <property type="entry name" value="Hlx-hairpin-Hlx_DNA-bd_motif"/>
</dbReference>
<dbReference type="InterPro" id="IPR010994">
    <property type="entry name" value="RuvA_2-like"/>
</dbReference>
<dbReference type="InterPro" id="IPR001943">
    <property type="entry name" value="UVR_dom"/>
</dbReference>
<dbReference type="InterPro" id="IPR036876">
    <property type="entry name" value="UVR_dom_sf"/>
</dbReference>
<dbReference type="InterPro" id="IPR050066">
    <property type="entry name" value="UvrABC_protein_C"/>
</dbReference>
<dbReference type="InterPro" id="IPR004791">
    <property type="entry name" value="UvrC"/>
</dbReference>
<dbReference type="InterPro" id="IPR001162">
    <property type="entry name" value="UvrC_RNase_H_dom"/>
</dbReference>
<dbReference type="InterPro" id="IPR038476">
    <property type="entry name" value="UvrC_RNase_H_dom_sf"/>
</dbReference>
<dbReference type="NCBIfam" id="NF001824">
    <property type="entry name" value="PRK00558.1-5"/>
    <property type="match status" value="1"/>
</dbReference>
<dbReference type="NCBIfam" id="TIGR00194">
    <property type="entry name" value="uvrC"/>
    <property type="match status" value="1"/>
</dbReference>
<dbReference type="PANTHER" id="PTHR30562:SF1">
    <property type="entry name" value="UVRABC SYSTEM PROTEIN C"/>
    <property type="match status" value="1"/>
</dbReference>
<dbReference type="PANTHER" id="PTHR30562">
    <property type="entry name" value="UVRC/OXIDOREDUCTASE"/>
    <property type="match status" value="1"/>
</dbReference>
<dbReference type="Pfam" id="PF01541">
    <property type="entry name" value="GIY-YIG"/>
    <property type="match status" value="1"/>
</dbReference>
<dbReference type="Pfam" id="PF14520">
    <property type="entry name" value="HHH_5"/>
    <property type="match status" value="1"/>
</dbReference>
<dbReference type="Pfam" id="PF02151">
    <property type="entry name" value="UVR"/>
    <property type="match status" value="1"/>
</dbReference>
<dbReference type="Pfam" id="PF22920">
    <property type="entry name" value="UvrC_RNaseH"/>
    <property type="match status" value="1"/>
</dbReference>
<dbReference type="Pfam" id="PF08459">
    <property type="entry name" value="UvrC_RNaseH_dom"/>
    <property type="match status" value="1"/>
</dbReference>
<dbReference type="SMART" id="SM00465">
    <property type="entry name" value="GIYc"/>
    <property type="match status" value="1"/>
</dbReference>
<dbReference type="SMART" id="SM00278">
    <property type="entry name" value="HhH1"/>
    <property type="match status" value="2"/>
</dbReference>
<dbReference type="SUPFAM" id="SSF46600">
    <property type="entry name" value="C-terminal UvrC-binding domain of UvrB"/>
    <property type="match status" value="1"/>
</dbReference>
<dbReference type="SUPFAM" id="SSF82771">
    <property type="entry name" value="GIY-YIG endonuclease"/>
    <property type="match status" value="1"/>
</dbReference>
<dbReference type="SUPFAM" id="SSF47781">
    <property type="entry name" value="RuvA domain 2-like"/>
    <property type="match status" value="1"/>
</dbReference>
<dbReference type="PROSITE" id="PS50164">
    <property type="entry name" value="GIY_YIG"/>
    <property type="match status" value="1"/>
</dbReference>
<dbReference type="PROSITE" id="PS50151">
    <property type="entry name" value="UVR"/>
    <property type="match status" value="1"/>
</dbReference>
<dbReference type="PROSITE" id="PS50165">
    <property type="entry name" value="UVRC"/>
    <property type="match status" value="1"/>
</dbReference>
<keyword id="KW-0963">Cytoplasm</keyword>
<keyword id="KW-0227">DNA damage</keyword>
<keyword id="KW-0228">DNA excision</keyword>
<keyword id="KW-0234">DNA repair</keyword>
<keyword id="KW-0267">Excision nuclease</keyword>
<keyword id="KW-1185">Reference proteome</keyword>
<keyword id="KW-0742">SOS response</keyword>
<proteinExistence type="inferred from homology"/>
<name>UVRC_ALBFT</name>